<gene>
    <name evidence="9" type="primary">LipL1</name>
    <name evidence="8" type="synonym">LplA</name>
    <name evidence="10" type="synonym">LplA1</name>
    <name evidence="11" type="ORF">PF3D7_1314600</name>
</gene>
<reference evidence="12" key="1">
    <citation type="journal article" date="2002" name="Nature">
        <title>Genome sequence of the human malaria parasite Plasmodium falciparum.</title>
        <authorList>
            <person name="Gardner M.J."/>
            <person name="Hall N."/>
            <person name="Fung E."/>
            <person name="White O."/>
            <person name="Berriman M."/>
            <person name="Hyman R.W."/>
            <person name="Carlton J.M."/>
            <person name="Pain A."/>
            <person name="Nelson K.E."/>
            <person name="Bowman S."/>
            <person name="Paulsen I.T."/>
            <person name="James K.D."/>
            <person name="Eisen J.A."/>
            <person name="Rutherford K.M."/>
            <person name="Salzberg S.L."/>
            <person name="Craig A."/>
            <person name="Kyes S."/>
            <person name="Chan M.-S."/>
            <person name="Nene V."/>
            <person name="Shallom S.J."/>
            <person name="Suh B."/>
            <person name="Peterson J."/>
            <person name="Angiuoli S."/>
            <person name="Pertea M."/>
            <person name="Allen J."/>
            <person name="Selengut J."/>
            <person name="Haft D."/>
            <person name="Mather M.W."/>
            <person name="Vaidya A.B."/>
            <person name="Martin D.M.A."/>
            <person name="Fairlamb A.H."/>
            <person name="Fraunholz M.J."/>
            <person name="Roos D.S."/>
            <person name="Ralph S.A."/>
            <person name="McFadden G.I."/>
            <person name="Cummings L.M."/>
            <person name="Subramanian G.M."/>
            <person name="Mungall C."/>
            <person name="Venter J.C."/>
            <person name="Carucci D.J."/>
            <person name="Hoffman S.L."/>
            <person name="Newbold C."/>
            <person name="Davis R.W."/>
            <person name="Fraser C.M."/>
            <person name="Barrell B.G."/>
        </authorList>
    </citation>
    <scope>NUCLEOTIDE SEQUENCE [LARGE SCALE GENOMIC DNA]</scope>
    <source>
        <strain evidence="12">3D7</strain>
    </source>
</reference>
<reference evidence="12" key="2">
    <citation type="journal article" date="2002" name="Nature">
        <title>Sequence of Plasmodium falciparum chromosomes 1, 3-9 and 13.</title>
        <authorList>
            <person name="Hall N."/>
            <person name="Pain A."/>
            <person name="Berriman M."/>
            <person name="Churcher C.M."/>
            <person name="Harris B."/>
            <person name="Harris D."/>
            <person name="Mungall K.L."/>
            <person name="Bowman S."/>
            <person name="Atkin R."/>
            <person name="Baker S."/>
            <person name="Barron A."/>
            <person name="Brooks K."/>
            <person name="Buckee C.O."/>
            <person name="Burrows C."/>
            <person name="Cherevach I."/>
            <person name="Chillingworth C."/>
            <person name="Chillingworth T."/>
            <person name="Christodoulou Z."/>
            <person name="Clark L."/>
            <person name="Clark R."/>
            <person name="Corton C."/>
            <person name="Cronin A."/>
            <person name="Davies R.M."/>
            <person name="Davis P."/>
            <person name="Dear P."/>
            <person name="Dearden F."/>
            <person name="Doggett J."/>
            <person name="Feltwell T."/>
            <person name="Goble A."/>
            <person name="Goodhead I."/>
            <person name="Gwilliam R."/>
            <person name="Hamlin N."/>
            <person name="Hance Z."/>
            <person name="Harper D."/>
            <person name="Hauser H."/>
            <person name="Hornsby T."/>
            <person name="Holroyd S."/>
            <person name="Horrocks P."/>
            <person name="Humphray S."/>
            <person name="Jagels K."/>
            <person name="James K.D."/>
            <person name="Johnson D."/>
            <person name="Kerhornou A."/>
            <person name="Knights A."/>
            <person name="Konfortov B."/>
            <person name="Kyes S."/>
            <person name="Larke N."/>
            <person name="Lawson D."/>
            <person name="Lennard N."/>
            <person name="Line A."/>
            <person name="Maddison M."/>
            <person name="Mclean J."/>
            <person name="Mooney P."/>
            <person name="Moule S."/>
            <person name="Murphy L."/>
            <person name="Oliver K."/>
            <person name="Ormond D."/>
            <person name="Price C."/>
            <person name="Quail M.A."/>
            <person name="Rabbinowitsch E."/>
            <person name="Rajandream M.A."/>
            <person name="Rutter S."/>
            <person name="Rutherford K.M."/>
            <person name="Sanders M."/>
            <person name="Simmonds M."/>
            <person name="Seeger K."/>
            <person name="Sharp S."/>
            <person name="Smith R."/>
            <person name="Squares R."/>
            <person name="Squares S."/>
            <person name="Stevens K."/>
            <person name="Taylor K."/>
            <person name="Tivey A."/>
            <person name="Unwin L."/>
            <person name="Whitehead S."/>
            <person name="Woodward J.R."/>
            <person name="Sulston J.E."/>
            <person name="Craig A."/>
            <person name="Newbold C."/>
            <person name="Barrell B.G."/>
        </authorList>
    </citation>
    <scope>NUCLEOTIDE SEQUENCE [LARGE SCALE GENOMIC DNA]</scope>
    <source>
        <strain evidence="12">3D7</strain>
    </source>
</reference>
<reference evidence="10" key="3">
    <citation type="journal article" date="2004" name="Mol. Microbiol.">
        <title>The human malaria parasite Plasmodium falciparum has distinct organelle-specific lipoylation pathways.</title>
        <authorList>
            <person name="Wrenger C."/>
            <person name="Mueller S."/>
        </authorList>
    </citation>
    <scope>SUBCELLULAR LOCATION</scope>
    <scope>DEVELOPMENTAL STAGE</scope>
</reference>
<reference evidence="10" key="4">
    <citation type="journal article" date="2007" name="Mol. Microbiol.">
        <title>Scavenging of the cofactor lipoate is essential for the survival of the malaria parasite Plasmodium falciparum.</title>
        <authorList>
            <person name="Allary M."/>
            <person name="Lu J.Z."/>
            <person name="Zhu L."/>
            <person name="Prigge S.T."/>
        </authorList>
    </citation>
    <scope>FUNCTION</scope>
    <scope>CATALYTIC ACTIVITY</scope>
    <scope>ACTIVITY REGULATION</scope>
    <scope>PATHWAY</scope>
</reference>
<reference evidence="10" key="5">
    <citation type="journal article" date="2014" name="Mol. Microbiol.">
        <title>Redox-dependent lipoylation of mitochondrial proteins in Plasmodium falciparum.</title>
        <authorList>
            <person name="Afanador G.A."/>
            <person name="Matthews K.A."/>
            <person name="Bartee D."/>
            <person name="Gisselberg J.E."/>
            <person name="Walters M.S."/>
            <person name="Freel Meyers C.L."/>
            <person name="Prigge S.T."/>
        </authorList>
    </citation>
    <scope>FUNCTION</scope>
    <scope>CATALYTIC ACTIVITY</scope>
    <scope>PATHWAY</scope>
    <scope>MUTAGENESIS OF LYS-160</scope>
</reference>
<reference evidence="13" key="6">
    <citation type="journal article" date="2017" name="Proteins">
        <title>Crystal structure of lipoate-bound lipoate ligase 1, LipL1, from Plasmodium falciparum.</title>
        <authorList>
            <person name="Guerra A.J."/>
            <person name="Afanador G.A."/>
            <person name="Prigge S.T."/>
        </authorList>
    </citation>
    <scope>X-RAY CRYSTALLOGRAPHY (2.32 ANGSTROMS) OF 20-407 IN COMPLEX WITH (R)-LIPOATE</scope>
    <scope>FUNCTION</scope>
    <scope>CATALYTIC ACTIVITY</scope>
</reference>
<name>LIPLA_PLAF7</name>
<comment type="function">
    <text evidence="5 6 7">Catalyzes both the ATP-dependent activation of exogenously supplied lipoate to lipoyl-AMP and the transfer of the activated lipoyl onto the lipoyl domains of lipoate-dependent enzymes (PubMed:17244193, PubMed:25116855, PubMed:28543853). In the mitochondrion, functions as a redox switch between two lipoylation routes (PubMed:25116855). Senses the oxidation state of lipoate and determines which downstream enzymes will be lipoylated (PubMed:25116855). In low reducing conditions, uses lipoate in its oxidized ring form to lipoylate glycine cleavage system H-protein GCVH (PubMed:17244193, PubMed:25116855, PubMed:28543853). In high reducing conditions and together with LipL2, uses reduced lipoate (dihydrolipoate) to lipoylate the E2 component of the branched chain alpha-ketoacid dehydrogenase complex BCKDH-E2/BCDH and the E2 component of the alpha-ketoglutarate dehydrogenase complex KDH. LipL1 is responsible for catalysing the activation of lipoate, forming lipoyl-AMP while LipL2 is required but is not capable of catalyzing this reaction (PubMed:17244193, PubMed:25116855).</text>
</comment>
<comment type="catalytic activity">
    <reaction evidence="5 6 7">
        <text>L-lysyl-[lipoyl-carrier protein] + (R)-lipoate + ATP = N(6)-[(R)-lipoyl]-L-lysyl-[lipoyl-carrier protein] + AMP + diphosphate + H(+)</text>
        <dbReference type="Rhea" id="RHEA:49288"/>
        <dbReference type="Rhea" id="RHEA-COMP:10500"/>
        <dbReference type="Rhea" id="RHEA-COMP:10502"/>
        <dbReference type="ChEBI" id="CHEBI:15378"/>
        <dbReference type="ChEBI" id="CHEBI:29969"/>
        <dbReference type="ChEBI" id="CHEBI:30616"/>
        <dbReference type="ChEBI" id="CHEBI:33019"/>
        <dbReference type="ChEBI" id="CHEBI:83088"/>
        <dbReference type="ChEBI" id="CHEBI:83099"/>
        <dbReference type="ChEBI" id="CHEBI:456215"/>
        <dbReference type="EC" id="6.3.1.20"/>
    </reaction>
</comment>
<comment type="catalytic activity">
    <reaction evidence="5 6">
        <text>(R)-dihydrolipoate + L-lysyl-[lipoyl-carrier protein] + ATP = N(6)-[(R)-dihydrolipoyl]-L-lysyl-[lipoyl-carrier protein] + AMP + diphosphate + H(+)</text>
        <dbReference type="Rhea" id="RHEA:72679"/>
        <dbReference type="Rhea" id="RHEA-COMP:10500"/>
        <dbReference type="Rhea" id="RHEA-COMP:16355"/>
        <dbReference type="ChEBI" id="CHEBI:15378"/>
        <dbReference type="ChEBI" id="CHEBI:29969"/>
        <dbReference type="ChEBI" id="CHEBI:30616"/>
        <dbReference type="ChEBI" id="CHEBI:33019"/>
        <dbReference type="ChEBI" id="CHEBI:83093"/>
        <dbReference type="ChEBI" id="CHEBI:83100"/>
        <dbReference type="ChEBI" id="CHEBI:456215"/>
    </reaction>
</comment>
<comment type="catalytic activity">
    <reaction evidence="5 6">
        <text>(R)-dihydrolipoate + ATP + H(+) = N(6)-[(R)-dihydrolipoyl]-5'-AMP + diphosphate</text>
        <dbReference type="Rhea" id="RHEA:72715"/>
        <dbReference type="ChEBI" id="CHEBI:15378"/>
        <dbReference type="ChEBI" id="CHEBI:30616"/>
        <dbReference type="ChEBI" id="CHEBI:33019"/>
        <dbReference type="ChEBI" id="CHEBI:83093"/>
        <dbReference type="ChEBI" id="CHEBI:192510"/>
    </reaction>
</comment>
<comment type="catalytic activity">
    <reaction evidence="5 6">
        <text>N(6)-[(R)-dihydrolipoyl]-5'-AMP + L-lysyl-[lipoyl-carrier protein] = N(6)-[(R)-dihydrolipoyl]-L-lysyl-[lipoyl-carrier protein] + AMP + 2 H(+)</text>
        <dbReference type="Rhea" id="RHEA:72719"/>
        <dbReference type="Rhea" id="RHEA-COMP:10500"/>
        <dbReference type="Rhea" id="RHEA-COMP:16355"/>
        <dbReference type="ChEBI" id="CHEBI:15378"/>
        <dbReference type="ChEBI" id="CHEBI:29969"/>
        <dbReference type="ChEBI" id="CHEBI:83100"/>
        <dbReference type="ChEBI" id="CHEBI:192510"/>
        <dbReference type="ChEBI" id="CHEBI:456215"/>
    </reaction>
</comment>
<comment type="activity regulation">
    <text evidence="5">Inhibited by the lipoate analog 8-bromo-octanoate (BrO) (PubMed:17244193). Catalytic activity is increased in the presence of Mg(2+) (PubMed:17244193).</text>
</comment>
<comment type="pathway">
    <text evidence="5 6">Protein modification; protein lipoylation via exogenous pathway; protein N(6)-(lipoyl)lysine from lipoate: step 1/2.</text>
</comment>
<comment type="pathway">
    <text evidence="5 6">Protein modification; protein lipoylation via exogenous pathway; protein N(6)-(lipoyl)lysine from lipoate: step 2/2.</text>
</comment>
<comment type="subcellular location">
    <subcellularLocation>
        <location evidence="4">Mitochondrion</location>
    </subcellularLocation>
</comment>
<comment type="developmental stage">
    <text evidence="4">Expressed during the asexual blood stage, predominantly at the ring and schizont stages (at protein level).</text>
</comment>
<comment type="similarity">
    <text evidence="10">Belongs to the LplA family.</text>
</comment>
<sequence length="408" mass="47943">MKRIFRLVRRCHYSTEKRTNGPLVLVSNNQNIHFNLSLENFLLNNYNDLLKYLNINTIEKFNEPILFLWRNNRSIIIGKNQNIWSECNLKNIKEDGVLVARRFTGGGAVYHDLGNVCFTFLNNNINTSSNFLIILNTLKNHFNIEAKTQGRNDITVNDQKCSGSAFKKIKDVFLHHGTILINLEKNILNKYLTPDKIKYIKHGVSSVNARTINLSEINNNITCENLCIALIKEFTKFYEQNYKENINNIKNLENNINNSNFQNKEQININNTNENNLINNTNIIPNDITVHYIDQNNNITKNPEFLKYYNLLKDWDWCYGKTPKFQNHIWKQFTFGKLELFFNVSNGFIKDGNIFSDCLDINLIDHLKSIFNNDIKYSKEDISIFFKKLNVENKNYLDEVRSWILQEL</sequence>
<dbReference type="EC" id="6.3.1.20" evidence="5 6 7"/>
<dbReference type="EMBL" id="AL844509">
    <property type="protein sequence ID" value="CAD52290.1"/>
    <property type="molecule type" value="Genomic_DNA"/>
</dbReference>
<dbReference type="RefSeq" id="XP_001349882.1">
    <property type="nucleotide sequence ID" value="XM_001349846.1"/>
</dbReference>
<dbReference type="PDB" id="5T8U">
    <property type="method" value="X-ray"/>
    <property type="resolution" value="2.32 A"/>
    <property type="chains" value="A/B=20-407"/>
</dbReference>
<dbReference type="PDBsum" id="5T8U"/>
<dbReference type="SMR" id="Q8IEG9"/>
<dbReference type="FunCoup" id="Q8IEG9">
    <property type="interactions" value="138"/>
</dbReference>
<dbReference type="STRING" id="36329.Q8IEG9"/>
<dbReference type="PaxDb" id="5833-PF13_0083"/>
<dbReference type="EnsemblProtists" id="CAD52290">
    <property type="protein sequence ID" value="CAD52290"/>
    <property type="gene ID" value="PF3D7_1314600"/>
</dbReference>
<dbReference type="GeneID" id="814061"/>
<dbReference type="KEGG" id="pfa:PF3D7_1314600"/>
<dbReference type="VEuPathDB" id="PlasmoDB:PF3D7_1314600"/>
<dbReference type="HOGENOM" id="CLU_022986_0_1_1"/>
<dbReference type="InParanoid" id="Q8IEG9"/>
<dbReference type="OMA" id="RYQNWDW"/>
<dbReference type="OrthoDB" id="201621at2759"/>
<dbReference type="PhylomeDB" id="Q8IEG9"/>
<dbReference type="BRENDA" id="6.3.1.20">
    <property type="organism ID" value="4889"/>
</dbReference>
<dbReference type="Reactome" id="R-PFA-9857492">
    <property type="pathway name" value="Protein lipoylation"/>
</dbReference>
<dbReference type="UniPathway" id="UPA00537">
    <property type="reaction ID" value="UER00594"/>
</dbReference>
<dbReference type="UniPathway" id="UPA00537">
    <property type="reaction ID" value="UER00595"/>
</dbReference>
<dbReference type="Proteomes" id="UP000001450">
    <property type="component" value="Chromosome 13"/>
</dbReference>
<dbReference type="GO" id="GO:0005737">
    <property type="term" value="C:cytoplasm"/>
    <property type="evidence" value="ECO:0000318"/>
    <property type="project" value="GO_Central"/>
</dbReference>
<dbReference type="GO" id="GO:0005739">
    <property type="term" value="C:mitochondrion"/>
    <property type="evidence" value="ECO:0000314"/>
    <property type="project" value="GeneDB"/>
</dbReference>
<dbReference type="GO" id="GO:0005524">
    <property type="term" value="F:ATP binding"/>
    <property type="evidence" value="ECO:0007669"/>
    <property type="project" value="UniProtKB-KW"/>
</dbReference>
<dbReference type="GO" id="GO:0016979">
    <property type="term" value="F:lipoate-protein ligase activity"/>
    <property type="evidence" value="ECO:0000314"/>
    <property type="project" value="GeneDB"/>
</dbReference>
<dbReference type="GO" id="GO:0017118">
    <property type="term" value="F:lipoyltransferase activity"/>
    <property type="evidence" value="ECO:0000318"/>
    <property type="project" value="GO_Central"/>
</dbReference>
<dbReference type="GO" id="GO:0046872">
    <property type="term" value="F:metal ion binding"/>
    <property type="evidence" value="ECO:0007669"/>
    <property type="project" value="UniProtKB-KW"/>
</dbReference>
<dbReference type="GO" id="GO:0006629">
    <property type="term" value="P:lipid metabolic process"/>
    <property type="evidence" value="ECO:0000250"/>
    <property type="project" value="GeneDB"/>
</dbReference>
<dbReference type="GO" id="GO:0009249">
    <property type="term" value="P:protein lipoylation"/>
    <property type="evidence" value="ECO:0000314"/>
    <property type="project" value="GeneDB"/>
</dbReference>
<dbReference type="CDD" id="cd16443">
    <property type="entry name" value="LplA"/>
    <property type="match status" value="1"/>
</dbReference>
<dbReference type="FunFam" id="3.30.390.50:FF:000007">
    <property type="entry name" value="Lipoate-protein ligase 1"/>
    <property type="match status" value="1"/>
</dbReference>
<dbReference type="FunFam" id="3.30.930.10:FF:000101">
    <property type="entry name" value="Lipoate-protein ligase A subunit 1"/>
    <property type="match status" value="1"/>
</dbReference>
<dbReference type="Gene3D" id="3.30.930.10">
    <property type="entry name" value="Bira Bifunctional Protein, Domain 2"/>
    <property type="match status" value="1"/>
</dbReference>
<dbReference type="Gene3D" id="3.30.390.50">
    <property type="entry name" value="CO dehydrogenase flavoprotein, C-terminal domain"/>
    <property type="match status" value="1"/>
</dbReference>
<dbReference type="InterPro" id="IPR045864">
    <property type="entry name" value="aa-tRNA-synth_II/BPL/LPL"/>
</dbReference>
<dbReference type="InterPro" id="IPR004143">
    <property type="entry name" value="BPL_LPL_catalytic"/>
</dbReference>
<dbReference type="InterPro" id="IPR019491">
    <property type="entry name" value="Lipoate_protein_ligase_C"/>
</dbReference>
<dbReference type="InterPro" id="IPR004562">
    <property type="entry name" value="LipoylTrfase_LipoateP_Ligase"/>
</dbReference>
<dbReference type="PANTHER" id="PTHR12561">
    <property type="entry name" value="LIPOATE-PROTEIN LIGASE"/>
    <property type="match status" value="1"/>
</dbReference>
<dbReference type="PANTHER" id="PTHR12561:SF3">
    <property type="entry name" value="LIPOYLTRANSFERASE 1, MITOCHONDRIAL"/>
    <property type="match status" value="1"/>
</dbReference>
<dbReference type="Pfam" id="PF10437">
    <property type="entry name" value="Lip_prot_lig_C"/>
    <property type="match status" value="1"/>
</dbReference>
<dbReference type="Pfam" id="PF21948">
    <property type="entry name" value="LplA-B_cat"/>
    <property type="match status" value="1"/>
</dbReference>
<dbReference type="SUPFAM" id="SSF55681">
    <property type="entry name" value="Class II aaRS and biotin synthetases"/>
    <property type="match status" value="1"/>
</dbReference>
<dbReference type="SUPFAM" id="SSF82649">
    <property type="entry name" value="SufE/NifU"/>
    <property type="match status" value="1"/>
</dbReference>
<dbReference type="PROSITE" id="PS51733">
    <property type="entry name" value="BPL_LPL_CATALYTIC"/>
    <property type="match status" value="1"/>
</dbReference>
<organism evidence="12">
    <name type="scientific">Plasmodium falciparum (isolate 3D7)</name>
    <dbReference type="NCBI Taxonomy" id="36329"/>
    <lineage>
        <taxon>Eukaryota</taxon>
        <taxon>Sar</taxon>
        <taxon>Alveolata</taxon>
        <taxon>Apicomplexa</taxon>
        <taxon>Aconoidasida</taxon>
        <taxon>Haemosporida</taxon>
        <taxon>Plasmodiidae</taxon>
        <taxon>Plasmodium</taxon>
        <taxon>Plasmodium (Laverania)</taxon>
    </lineage>
</organism>
<feature type="transit peptide" description="Mitochondrion" evidence="2">
    <location>
        <begin position="1"/>
        <end position="18"/>
    </location>
</feature>
<feature type="chain" id="PRO_0000456651" description="Lipoate--protein ligase 1" evidence="2">
    <location>
        <begin position="19"/>
        <end position="408"/>
    </location>
</feature>
<feature type="domain" description="BPL/LPL catalytic" evidence="3">
    <location>
        <begin position="60"/>
        <end position="242"/>
    </location>
</feature>
<feature type="binding site" evidence="1">
    <location>
        <position position="102"/>
    </location>
    <ligand>
        <name>ATP</name>
        <dbReference type="ChEBI" id="CHEBI:30616"/>
    </ligand>
</feature>
<feature type="binding site" evidence="7 13">
    <location>
        <position position="107"/>
    </location>
    <ligand>
        <name>(R)-lipoate</name>
        <dbReference type="ChEBI" id="CHEBI:83088"/>
    </ligand>
</feature>
<feature type="binding site" evidence="1">
    <location>
        <position position="107"/>
    </location>
    <ligand>
        <name>ATP</name>
        <dbReference type="ChEBI" id="CHEBI:30616"/>
    </ligand>
</feature>
<feature type="binding site" evidence="1">
    <location>
        <position position="110"/>
    </location>
    <ligand>
        <name>ATP</name>
        <dbReference type="ChEBI" id="CHEBI:30616"/>
    </ligand>
</feature>
<feature type="binding site" evidence="1">
    <location>
        <position position="153"/>
    </location>
    <ligand>
        <name>Mg(2+)</name>
        <dbReference type="ChEBI" id="CHEBI:18420"/>
    </ligand>
</feature>
<feature type="binding site" evidence="7 13">
    <location>
        <position position="160"/>
    </location>
    <ligand>
        <name>(R)-lipoate</name>
        <dbReference type="ChEBI" id="CHEBI:83088"/>
    </ligand>
</feature>
<feature type="binding site" evidence="1">
    <location>
        <position position="160"/>
    </location>
    <ligand>
        <name>ATP</name>
        <dbReference type="ChEBI" id="CHEBI:30616"/>
    </ligand>
</feature>
<feature type="mutagenesis site" description="Loses the ability to form the reaction intermediate lipoyl-AMP resulting in a loss of catalytic activity. Abolishes lipoylation of GCVH/H-protein. Abolishes lipoylation of BCKDH-E2/BCDH and KDH in the presence of LipL2." evidence="6">
    <original>K</original>
    <variation>A</variation>
    <location>
        <position position="160"/>
    </location>
</feature>
<feature type="strand" evidence="14">
    <location>
        <begin position="23"/>
        <end position="27"/>
    </location>
</feature>
<feature type="helix" evidence="14">
    <location>
        <begin position="32"/>
        <end position="44"/>
    </location>
</feature>
<feature type="helix" evidence="14">
    <location>
        <begin position="45"/>
        <end position="48"/>
    </location>
</feature>
<feature type="helix" evidence="14">
    <location>
        <begin position="49"/>
        <end position="52"/>
    </location>
</feature>
<feature type="strand" evidence="14">
    <location>
        <begin position="65"/>
        <end position="69"/>
    </location>
</feature>
<feature type="strand" evidence="14">
    <location>
        <begin position="72"/>
        <end position="76"/>
    </location>
</feature>
<feature type="helix" evidence="14">
    <location>
        <begin position="83"/>
        <end position="86"/>
    </location>
</feature>
<feature type="helix" evidence="14">
    <location>
        <begin position="89"/>
        <end position="94"/>
    </location>
</feature>
<feature type="strand" evidence="14">
    <location>
        <begin position="98"/>
        <end position="100"/>
    </location>
</feature>
<feature type="strand" evidence="14">
    <location>
        <begin position="109"/>
        <end position="111"/>
    </location>
</feature>
<feature type="strand" evidence="14">
    <location>
        <begin position="115"/>
        <end position="124"/>
    </location>
</feature>
<feature type="helix" evidence="14">
    <location>
        <begin position="127"/>
        <end position="142"/>
    </location>
</feature>
<feature type="strand" evidence="14">
    <location>
        <begin position="150"/>
        <end position="169"/>
    </location>
</feature>
<feature type="strand" evidence="14">
    <location>
        <begin position="172"/>
        <end position="182"/>
    </location>
</feature>
<feature type="helix" evidence="14">
    <location>
        <begin position="188"/>
        <end position="191"/>
    </location>
</feature>
<feature type="turn" evidence="14">
    <location>
        <begin position="215"/>
        <end position="218"/>
    </location>
</feature>
<feature type="helix" evidence="14">
    <location>
        <begin position="223"/>
        <end position="237"/>
    </location>
</feature>
<feature type="strand" evidence="14">
    <location>
        <begin position="240"/>
        <end position="242"/>
    </location>
</feature>
<feature type="turn" evidence="14">
    <location>
        <begin position="281"/>
        <end position="283"/>
    </location>
</feature>
<feature type="helix" evidence="14">
    <location>
        <begin position="297"/>
        <end position="300"/>
    </location>
</feature>
<feature type="helix" evidence="14">
    <location>
        <begin position="303"/>
        <end position="313"/>
    </location>
</feature>
<feature type="helix" evidence="14">
    <location>
        <begin position="315"/>
        <end position="318"/>
    </location>
</feature>
<feature type="strand" evidence="14">
    <location>
        <begin position="326"/>
        <end position="333"/>
    </location>
</feature>
<feature type="strand" evidence="14">
    <location>
        <begin position="336"/>
        <end position="356"/>
    </location>
</feature>
<feature type="helix" evidence="14">
    <location>
        <begin position="361"/>
        <end position="368"/>
    </location>
</feature>
<feature type="turn" evidence="14">
    <location>
        <begin position="369"/>
        <end position="372"/>
    </location>
</feature>
<feature type="helix" evidence="14">
    <location>
        <begin position="379"/>
        <end position="388"/>
    </location>
</feature>
<feature type="helix" evidence="14">
    <location>
        <begin position="394"/>
        <end position="404"/>
    </location>
</feature>
<keyword id="KW-0002">3D-structure</keyword>
<keyword id="KW-0067">ATP-binding</keyword>
<keyword id="KW-0436">Ligase</keyword>
<keyword id="KW-0460">Magnesium</keyword>
<keyword id="KW-0479">Metal-binding</keyword>
<keyword id="KW-0496">Mitochondrion</keyword>
<keyword id="KW-0547">Nucleotide-binding</keyword>
<keyword id="KW-1185">Reference proteome</keyword>
<keyword id="KW-0809">Transit peptide</keyword>
<proteinExistence type="evidence at protein level"/>
<protein>
    <recommendedName>
        <fullName evidence="8">Lipoate--protein ligase 1</fullName>
        <ecNumber evidence="5 6 7">6.3.1.20</ecNumber>
    </recommendedName>
</protein>
<accession>Q8IEG9</accession>
<evidence type="ECO:0000250" key="1">
    <source>
        <dbReference type="UniProtKB" id="Q9HKT1"/>
    </source>
</evidence>
<evidence type="ECO:0000255" key="2"/>
<evidence type="ECO:0000255" key="3">
    <source>
        <dbReference type="PROSITE-ProRule" id="PRU01067"/>
    </source>
</evidence>
<evidence type="ECO:0000269" key="4">
    <source>
    </source>
</evidence>
<evidence type="ECO:0000269" key="5">
    <source>
    </source>
</evidence>
<evidence type="ECO:0000269" key="6">
    <source>
    </source>
</evidence>
<evidence type="ECO:0000269" key="7">
    <source>
    </source>
</evidence>
<evidence type="ECO:0000303" key="8">
    <source>
    </source>
</evidence>
<evidence type="ECO:0000303" key="9">
    <source>
    </source>
</evidence>
<evidence type="ECO:0000305" key="10"/>
<evidence type="ECO:0000312" key="11">
    <source>
        <dbReference type="EMBL" id="CAD52290.1"/>
    </source>
</evidence>
<evidence type="ECO:0000312" key="12">
    <source>
        <dbReference type="Proteomes" id="UP000001450"/>
    </source>
</evidence>
<evidence type="ECO:0007744" key="13">
    <source>
        <dbReference type="PDB" id="5T8U"/>
    </source>
</evidence>
<evidence type="ECO:0007829" key="14">
    <source>
        <dbReference type="PDB" id="5T8U"/>
    </source>
</evidence>